<comment type="similarity">
    <text evidence="1">To class-3 of adenylyl cyclases.</text>
</comment>
<name>Y1359_MYCTU</name>
<organism>
    <name type="scientific">Mycobacterium tuberculosis (strain ATCC 25618 / H37Rv)</name>
    <dbReference type="NCBI Taxonomy" id="83332"/>
    <lineage>
        <taxon>Bacteria</taxon>
        <taxon>Bacillati</taxon>
        <taxon>Actinomycetota</taxon>
        <taxon>Actinomycetes</taxon>
        <taxon>Mycobacteriales</taxon>
        <taxon>Mycobacteriaceae</taxon>
        <taxon>Mycobacterium</taxon>
        <taxon>Mycobacterium tuberculosis complex</taxon>
    </lineage>
</organism>
<accession>P9WM05</accession>
<accession>L0T6M3</accession>
<accession>Q11029</accession>
<dbReference type="EMBL" id="AL123456">
    <property type="protein sequence ID" value="CCP44117.1"/>
    <property type="molecule type" value="Genomic_DNA"/>
</dbReference>
<dbReference type="PIR" id="F70741">
    <property type="entry name" value="F70741"/>
</dbReference>
<dbReference type="RefSeq" id="NP_215875.1">
    <property type="nucleotide sequence ID" value="NC_000962.3"/>
</dbReference>
<dbReference type="RefSeq" id="WP_003407052.1">
    <property type="nucleotide sequence ID" value="NC_000962.3"/>
</dbReference>
<dbReference type="SMR" id="P9WM05"/>
<dbReference type="STRING" id="83332.Rv1359"/>
<dbReference type="PaxDb" id="83332-Rv1359"/>
<dbReference type="DNASU" id="886841"/>
<dbReference type="GeneID" id="886841"/>
<dbReference type="KEGG" id="mtu:Rv1359"/>
<dbReference type="KEGG" id="mtv:RVBD_1359"/>
<dbReference type="TubercuList" id="Rv1359"/>
<dbReference type="eggNOG" id="COG2114">
    <property type="taxonomic scope" value="Bacteria"/>
</dbReference>
<dbReference type="InParanoid" id="P9WM05"/>
<dbReference type="OrthoDB" id="4624147at2"/>
<dbReference type="BRENDA" id="4.6.1.1">
    <property type="organism ID" value="3445"/>
</dbReference>
<dbReference type="Proteomes" id="UP000001584">
    <property type="component" value="Chromosome"/>
</dbReference>
<dbReference type="Gene3D" id="3.30.70.1230">
    <property type="entry name" value="Nucleotide cyclase"/>
    <property type="match status" value="1"/>
</dbReference>
<dbReference type="InterPro" id="IPR029787">
    <property type="entry name" value="Nucleotide_cyclase"/>
</dbReference>
<dbReference type="SUPFAM" id="SSF55073">
    <property type="entry name" value="Nucleotide cyclase"/>
    <property type="match status" value="1"/>
</dbReference>
<feature type="chain" id="PRO_0000103830" description="Uncharacterized protein Rv1359">
    <location>
        <begin position="1"/>
        <end position="250"/>
    </location>
</feature>
<gene>
    <name type="ordered locus">Rv1359</name>
    <name type="ORF">MTCY02B10.23</name>
</gene>
<keyword id="KW-1185">Reference proteome</keyword>
<reference key="1">
    <citation type="journal article" date="1998" name="Nature">
        <title>Deciphering the biology of Mycobacterium tuberculosis from the complete genome sequence.</title>
        <authorList>
            <person name="Cole S.T."/>
            <person name="Brosch R."/>
            <person name="Parkhill J."/>
            <person name="Garnier T."/>
            <person name="Churcher C.M."/>
            <person name="Harris D.E."/>
            <person name="Gordon S.V."/>
            <person name="Eiglmeier K."/>
            <person name="Gas S."/>
            <person name="Barry C.E. III"/>
            <person name="Tekaia F."/>
            <person name="Badcock K."/>
            <person name="Basham D."/>
            <person name="Brown D."/>
            <person name="Chillingworth T."/>
            <person name="Connor R."/>
            <person name="Davies R.M."/>
            <person name="Devlin K."/>
            <person name="Feltwell T."/>
            <person name="Gentles S."/>
            <person name="Hamlin N."/>
            <person name="Holroyd S."/>
            <person name="Hornsby T."/>
            <person name="Jagels K."/>
            <person name="Krogh A."/>
            <person name="McLean J."/>
            <person name="Moule S."/>
            <person name="Murphy L.D."/>
            <person name="Oliver S."/>
            <person name="Osborne J."/>
            <person name="Quail M.A."/>
            <person name="Rajandream M.A."/>
            <person name="Rogers J."/>
            <person name="Rutter S."/>
            <person name="Seeger K."/>
            <person name="Skelton S."/>
            <person name="Squares S."/>
            <person name="Squares R."/>
            <person name="Sulston J.E."/>
            <person name="Taylor K."/>
            <person name="Whitehead S."/>
            <person name="Barrell B.G."/>
        </authorList>
    </citation>
    <scope>NUCLEOTIDE SEQUENCE [LARGE SCALE GENOMIC DNA]</scope>
    <source>
        <strain>ATCC 25618 / H37Rv</strain>
    </source>
</reference>
<proteinExistence type="predicted"/>
<evidence type="ECO:0000305" key="1"/>
<protein>
    <recommendedName>
        <fullName>Uncharacterized protein Rv1359</fullName>
    </recommendedName>
</protein>
<sequence length="250" mass="26886">MFMALRAPMLERMNGLHTDDAPVNWLERRGGRLTSRRRVTLLHAGVEHPMRLWGVQSEAITAAMVLSRKVSAIIAGHCGVRLVDQGVGDGFVAAFAHASDAVACALELHQAPLSPIVLRIGIHTGEAQLVDERIYAGATMNLAAELRDLAHGGQTVMSGATEDAVLGRLPMRAWLIGLRPMEGSPEGHNFPQSQRIAQLCHPNLRNTFPPLRMRIADASGIPYVGRILVNVQVVPHWEGGCAAAGMVLAG</sequence>